<accession>P43296</accession>
<accession>Q0WWF3</accession>
<accession>Q8H7C0</accession>
<accession>Q8LAT5</accession>
<comment type="function">
    <text evidence="2 11">Probable thiol protease (By similarity). Required for RRS1-mediated resistance against Ralstonia solanacearum. Plays a crucial role as host factor for PopP2-triggered RRS1-mediated resistance. Interacts with the R.solanacearum type III effector PopP2 to form a nuclear complex that is required for activation of the RRS1-mediated resistance response (PubMed:18708476).</text>
</comment>
<comment type="subunit">
    <text evidence="11">Interacts with the Ralstonia solanacearum type III effector PopP2.</text>
</comment>
<comment type="subcellular location">
    <subcellularLocation>
        <location evidence="11">Lytic vacuole</location>
    </subcellularLocation>
    <subcellularLocation>
        <location evidence="11">Nucleus</location>
    </subcellularLocation>
    <text evidence="11">Predominantly vacuolar. From the Golgi apparatus, probably transported to the lytic vacuole (LV) in clathrin-coated vesicles (CCVs) via the prevacuolar compartment (PVC). Relocalizes to the nucleus when associated in a complex with the Ralstonia solanacearum type III effector PopP2.</text>
</comment>
<comment type="induction">
    <text evidence="10 12">By high salt conditions (PubMed:8325504). Induced by drought stress (PubMed:12102506, PubMed:8325504).</text>
</comment>
<comment type="similarity">
    <text evidence="7 8 9">Belongs to the peptidase C1 family.</text>
</comment>
<keyword id="KW-1015">Disulfide bond</keyword>
<keyword id="KW-0325">Glycoprotein</keyword>
<keyword id="KW-0378">Hydrolase</keyword>
<keyword id="KW-0539">Nucleus</keyword>
<keyword id="KW-0645">Protease</keyword>
<keyword id="KW-1185">Reference proteome</keyword>
<keyword id="KW-0732">Signal</keyword>
<keyword id="KW-0788">Thiol protease</keyword>
<keyword id="KW-0926">Vacuole</keyword>
<keyword id="KW-0865">Zymogen</keyword>
<dbReference type="EC" id="3.4.22.-" evidence="3"/>
<dbReference type="EMBL" id="D13042">
    <property type="protein sequence ID" value="BAA02373.1"/>
    <property type="molecule type" value="Genomic_DNA"/>
</dbReference>
<dbReference type="EMBL" id="AL035679">
    <property type="protein sequence ID" value="CAB38829.1"/>
    <property type="molecule type" value="Genomic_DNA"/>
</dbReference>
<dbReference type="EMBL" id="AL161594">
    <property type="protein sequence ID" value="CAB80572.1"/>
    <property type="molecule type" value="Genomic_DNA"/>
</dbReference>
<dbReference type="EMBL" id="CP002687">
    <property type="protein sequence ID" value="AEE87016.1"/>
    <property type="molecule type" value="Genomic_DNA"/>
</dbReference>
<dbReference type="EMBL" id="AY080598">
    <property type="protein sequence ID" value="AAL85009.1"/>
    <property type="molecule type" value="mRNA"/>
</dbReference>
<dbReference type="EMBL" id="AY133844">
    <property type="protein sequence ID" value="AAM91778.1"/>
    <property type="molecule type" value="mRNA"/>
</dbReference>
<dbReference type="EMBL" id="AK226399">
    <property type="protein sequence ID" value="BAE98545.1"/>
    <property type="molecule type" value="mRNA"/>
</dbReference>
<dbReference type="EMBL" id="AY087621">
    <property type="protein sequence ID" value="AAM65162.1"/>
    <property type="molecule type" value="mRNA"/>
</dbReference>
<dbReference type="EMBL" id="AF083750">
    <property type="protein sequence ID" value="AAN60308.1"/>
    <property type="molecule type" value="mRNA"/>
</dbReference>
<dbReference type="PIR" id="JN0718">
    <property type="entry name" value="JN0718"/>
</dbReference>
<dbReference type="RefSeq" id="NP_568052.1">
    <property type="nucleotide sequence ID" value="NM_120069.5"/>
</dbReference>
<dbReference type="SMR" id="P43296"/>
<dbReference type="FunCoup" id="P43296">
    <property type="interactions" value="616"/>
</dbReference>
<dbReference type="STRING" id="3702.P43296"/>
<dbReference type="MEROPS" id="C01.022"/>
<dbReference type="GlyCosmos" id="P43296">
    <property type="glycosylation" value="1 site, No reported glycans"/>
</dbReference>
<dbReference type="GlyGen" id="P43296">
    <property type="glycosylation" value="2 sites"/>
</dbReference>
<dbReference type="PaxDb" id="3702-AT4G39090.1"/>
<dbReference type="ProteomicsDB" id="236539"/>
<dbReference type="EnsemblPlants" id="AT4G39090.1">
    <property type="protein sequence ID" value="AT4G39090.1"/>
    <property type="gene ID" value="AT4G39090"/>
</dbReference>
<dbReference type="GeneID" id="830064"/>
<dbReference type="Gramene" id="AT4G39090.1">
    <property type="protein sequence ID" value="AT4G39090.1"/>
    <property type="gene ID" value="AT4G39090"/>
</dbReference>
<dbReference type="KEGG" id="ath:AT4G39090"/>
<dbReference type="Araport" id="AT4G39090"/>
<dbReference type="TAIR" id="AT4G39090">
    <property type="gene designation" value="RD19"/>
</dbReference>
<dbReference type="eggNOG" id="KOG1542">
    <property type="taxonomic scope" value="Eukaryota"/>
</dbReference>
<dbReference type="HOGENOM" id="CLU_012184_1_3_1"/>
<dbReference type="InParanoid" id="P43296"/>
<dbReference type="OMA" id="RRHQKMD"/>
<dbReference type="PhylomeDB" id="P43296"/>
<dbReference type="PRO" id="PR:P43296"/>
<dbReference type="Proteomes" id="UP000006548">
    <property type="component" value="Chromosome 4"/>
</dbReference>
<dbReference type="ExpressionAtlas" id="P43296">
    <property type="expression patterns" value="baseline and differential"/>
</dbReference>
<dbReference type="GO" id="GO:0000323">
    <property type="term" value="C:lytic vacuole"/>
    <property type="evidence" value="ECO:0000314"/>
    <property type="project" value="UniProtKB"/>
</dbReference>
<dbReference type="GO" id="GO:0005634">
    <property type="term" value="C:nucleus"/>
    <property type="evidence" value="ECO:0000314"/>
    <property type="project" value="TAIR"/>
</dbReference>
<dbReference type="GO" id="GO:0005886">
    <property type="term" value="C:plasma membrane"/>
    <property type="evidence" value="ECO:0007005"/>
    <property type="project" value="TAIR"/>
</dbReference>
<dbReference type="GO" id="GO:0005773">
    <property type="term" value="C:vacuole"/>
    <property type="evidence" value="ECO:0000314"/>
    <property type="project" value="TAIR"/>
</dbReference>
<dbReference type="GO" id="GO:0004197">
    <property type="term" value="F:cysteine-type endopeptidase activity"/>
    <property type="evidence" value="ECO:0000250"/>
    <property type="project" value="TAIR"/>
</dbReference>
<dbReference type="GO" id="GO:0042742">
    <property type="term" value="P:defense response to bacterium"/>
    <property type="evidence" value="ECO:0000315"/>
    <property type="project" value="TAIR"/>
</dbReference>
<dbReference type="GO" id="GO:0006508">
    <property type="term" value="P:proteolysis"/>
    <property type="evidence" value="ECO:0007669"/>
    <property type="project" value="UniProtKB-KW"/>
</dbReference>
<dbReference type="GO" id="GO:0006970">
    <property type="term" value="P:response to osmotic stress"/>
    <property type="evidence" value="ECO:0000316"/>
    <property type="project" value="TAIR"/>
</dbReference>
<dbReference type="GO" id="GO:0009651">
    <property type="term" value="P:response to salt stress"/>
    <property type="evidence" value="ECO:0000270"/>
    <property type="project" value="TAIR"/>
</dbReference>
<dbReference type="CDD" id="cd02248">
    <property type="entry name" value="Peptidase_C1A"/>
    <property type="match status" value="1"/>
</dbReference>
<dbReference type="FunFam" id="3.90.70.10:FF:000057">
    <property type="entry name" value="Cysteine protease RD19A"/>
    <property type="match status" value="1"/>
</dbReference>
<dbReference type="Gene3D" id="3.90.70.10">
    <property type="entry name" value="Cysteine proteinases"/>
    <property type="match status" value="1"/>
</dbReference>
<dbReference type="InterPro" id="IPR038765">
    <property type="entry name" value="Papain-like_cys_pep_sf"/>
</dbReference>
<dbReference type="InterPro" id="IPR025661">
    <property type="entry name" value="Pept_asp_AS"/>
</dbReference>
<dbReference type="InterPro" id="IPR000169">
    <property type="entry name" value="Pept_cys_AS"/>
</dbReference>
<dbReference type="InterPro" id="IPR025660">
    <property type="entry name" value="Pept_his_AS"/>
</dbReference>
<dbReference type="InterPro" id="IPR013128">
    <property type="entry name" value="Peptidase_C1A"/>
</dbReference>
<dbReference type="InterPro" id="IPR000668">
    <property type="entry name" value="Peptidase_C1A_C"/>
</dbReference>
<dbReference type="InterPro" id="IPR039417">
    <property type="entry name" value="Peptidase_C1A_papain-like"/>
</dbReference>
<dbReference type="InterPro" id="IPR013201">
    <property type="entry name" value="Prot_inhib_I29"/>
</dbReference>
<dbReference type="PANTHER" id="PTHR12411">
    <property type="entry name" value="CYSTEINE PROTEASE FAMILY C1-RELATED"/>
    <property type="match status" value="1"/>
</dbReference>
<dbReference type="Pfam" id="PF08246">
    <property type="entry name" value="Inhibitor_I29"/>
    <property type="match status" value="1"/>
</dbReference>
<dbReference type="Pfam" id="PF00112">
    <property type="entry name" value="Peptidase_C1"/>
    <property type="match status" value="1"/>
</dbReference>
<dbReference type="PRINTS" id="PR00705">
    <property type="entry name" value="PAPAIN"/>
</dbReference>
<dbReference type="SMART" id="SM00848">
    <property type="entry name" value="Inhibitor_I29"/>
    <property type="match status" value="1"/>
</dbReference>
<dbReference type="SMART" id="SM00645">
    <property type="entry name" value="Pept_C1"/>
    <property type="match status" value="1"/>
</dbReference>
<dbReference type="SUPFAM" id="SSF54001">
    <property type="entry name" value="Cysteine proteinases"/>
    <property type="match status" value="1"/>
</dbReference>
<dbReference type="PROSITE" id="PS00640">
    <property type="entry name" value="THIOL_PROTEASE_ASN"/>
    <property type="match status" value="1"/>
</dbReference>
<dbReference type="PROSITE" id="PS00139">
    <property type="entry name" value="THIOL_PROTEASE_CYS"/>
    <property type="match status" value="1"/>
</dbReference>
<dbReference type="PROSITE" id="PS00639">
    <property type="entry name" value="THIOL_PROTEASE_HIS"/>
    <property type="match status" value="1"/>
</dbReference>
<name>RD19A_ARATH</name>
<proteinExistence type="evidence at protein level"/>
<feature type="signal peptide" evidence="5">
    <location>
        <begin position="1"/>
        <end position="22"/>
    </location>
</feature>
<feature type="propeptide" id="PRO_0000026455" description="Activation peptide" evidence="1">
    <location>
        <begin position="23"/>
        <end position="134"/>
    </location>
</feature>
<feature type="chain" id="PRO_0000026456" description="Cysteine protease RD19A">
    <location>
        <begin position="135"/>
        <end position="368"/>
    </location>
</feature>
<feature type="active site" evidence="7">
    <location>
        <position position="159"/>
    </location>
</feature>
<feature type="active site" evidence="8">
    <location>
        <position position="302"/>
    </location>
</feature>
<feature type="active site" evidence="9">
    <location>
        <position position="329"/>
    </location>
</feature>
<feature type="glycosylation site" description="N-linked (GlcNAc...) asparagine" evidence="6">
    <location>
        <position position="253"/>
    </location>
</feature>
<feature type="disulfide bond" evidence="4">
    <location>
        <begin position="156"/>
        <end position="206"/>
    </location>
</feature>
<feature type="disulfide bond" evidence="4">
    <location>
        <begin position="190"/>
        <end position="240"/>
    </location>
</feature>
<feature type="disulfide bond" evidence="4">
    <location>
        <begin position="296"/>
        <end position="350"/>
    </location>
</feature>
<feature type="sequence conflict" description="In Ref. 7; AAN60308." evidence="14" ref="7">
    <original>S</original>
    <variation>L</variation>
    <location>
        <position position="19"/>
    </location>
</feature>
<feature type="sequence conflict" description="In Ref. 6; AAM65162." evidence="14" ref="6">
    <original>Y</original>
    <variation>H</variation>
    <location>
        <position position="217"/>
    </location>
</feature>
<reference key="1">
    <citation type="journal article" date="1993" name="Gene">
        <title>Structure and expression of two genes that encode distinct drought-inducible cysteine proteinases in Arabidopsis thaliana.</title>
        <authorList>
            <person name="Koizumi M."/>
            <person name="Yamaguchi-Shinozaki K."/>
            <person name="Tsuji H."/>
            <person name="Shinozaki K."/>
        </authorList>
    </citation>
    <scope>NUCLEOTIDE SEQUENCE [GENOMIC DNA]</scope>
    <scope>INDUCTION</scope>
    <source>
        <strain>cv. Columbia</strain>
    </source>
</reference>
<reference key="2">
    <citation type="journal article" date="1999" name="Nature">
        <title>Sequence and analysis of chromosome 4 of the plant Arabidopsis thaliana.</title>
        <authorList>
            <person name="Mayer K.F.X."/>
            <person name="Schueller C."/>
            <person name="Wambutt R."/>
            <person name="Murphy G."/>
            <person name="Volckaert G."/>
            <person name="Pohl T."/>
            <person name="Duesterhoeft A."/>
            <person name="Stiekema W."/>
            <person name="Entian K.-D."/>
            <person name="Terryn N."/>
            <person name="Harris B."/>
            <person name="Ansorge W."/>
            <person name="Brandt P."/>
            <person name="Grivell L.A."/>
            <person name="Rieger M."/>
            <person name="Weichselgartner M."/>
            <person name="de Simone V."/>
            <person name="Obermaier B."/>
            <person name="Mache R."/>
            <person name="Mueller M."/>
            <person name="Kreis M."/>
            <person name="Delseny M."/>
            <person name="Puigdomenech P."/>
            <person name="Watson M."/>
            <person name="Schmidtheini T."/>
            <person name="Reichert B."/>
            <person name="Portetelle D."/>
            <person name="Perez-Alonso M."/>
            <person name="Boutry M."/>
            <person name="Bancroft I."/>
            <person name="Vos P."/>
            <person name="Hoheisel J."/>
            <person name="Zimmermann W."/>
            <person name="Wedler H."/>
            <person name="Ridley P."/>
            <person name="Langham S.-A."/>
            <person name="McCullagh B."/>
            <person name="Bilham L."/>
            <person name="Robben J."/>
            <person name="van der Schueren J."/>
            <person name="Grymonprez B."/>
            <person name="Chuang Y.-J."/>
            <person name="Vandenbussche F."/>
            <person name="Braeken M."/>
            <person name="Weltjens I."/>
            <person name="Voet M."/>
            <person name="Bastiaens I."/>
            <person name="Aert R."/>
            <person name="Defoor E."/>
            <person name="Weitzenegger T."/>
            <person name="Bothe G."/>
            <person name="Ramsperger U."/>
            <person name="Hilbert H."/>
            <person name="Braun M."/>
            <person name="Holzer E."/>
            <person name="Brandt A."/>
            <person name="Peters S."/>
            <person name="van Staveren M."/>
            <person name="Dirkse W."/>
            <person name="Mooijman P."/>
            <person name="Klein Lankhorst R."/>
            <person name="Rose M."/>
            <person name="Hauf J."/>
            <person name="Koetter P."/>
            <person name="Berneiser S."/>
            <person name="Hempel S."/>
            <person name="Feldpausch M."/>
            <person name="Lamberth S."/>
            <person name="Van den Daele H."/>
            <person name="De Keyser A."/>
            <person name="Buysshaert C."/>
            <person name="Gielen J."/>
            <person name="Villarroel R."/>
            <person name="De Clercq R."/>
            <person name="van Montagu M."/>
            <person name="Rogers J."/>
            <person name="Cronin A."/>
            <person name="Quail M.A."/>
            <person name="Bray-Allen S."/>
            <person name="Clark L."/>
            <person name="Doggett J."/>
            <person name="Hall S."/>
            <person name="Kay M."/>
            <person name="Lennard N."/>
            <person name="McLay K."/>
            <person name="Mayes R."/>
            <person name="Pettett A."/>
            <person name="Rajandream M.A."/>
            <person name="Lyne M."/>
            <person name="Benes V."/>
            <person name="Rechmann S."/>
            <person name="Borkova D."/>
            <person name="Bloecker H."/>
            <person name="Scharfe M."/>
            <person name="Grimm M."/>
            <person name="Loehnert T.-H."/>
            <person name="Dose S."/>
            <person name="de Haan M."/>
            <person name="Maarse A.C."/>
            <person name="Schaefer M."/>
            <person name="Mueller-Auer S."/>
            <person name="Gabel C."/>
            <person name="Fuchs M."/>
            <person name="Fartmann B."/>
            <person name="Granderath K."/>
            <person name="Dauner D."/>
            <person name="Herzl A."/>
            <person name="Neumann S."/>
            <person name="Argiriou A."/>
            <person name="Vitale D."/>
            <person name="Liguori R."/>
            <person name="Piravandi E."/>
            <person name="Massenet O."/>
            <person name="Quigley F."/>
            <person name="Clabauld G."/>
            <person name="Muendlein A."/>
            <person name="Felber R."/>
            <person name="Schnabl S."/>
            <person name="Hiller R."/>
            <person name="Schmidt W."/>
            <person name="Lecharny A."/>
            <person name="Aubourg S."/>
            <person name="Chefdor F."/>
            <person name="Cooke R."/>
            <person name="Berger C."/>
            <person name="Monfort A."/>
            <person name="Casacuberta E."/>
            <person name="Gibbons T."/>
            <person name="Weber N."/>
            <person name="Vandenbol M."/>
            <person name="Bargues M."/>
            <person name="Terol J."/>
            <person name="Torres A."/>
            <person name="Perez-Perez A."/>
            <person name="Purnelle B."/>
            <person name="Bent E."/>
            <person name="Johnson S."/>
            <person name="Tacon D."/>
            <person name="Jesse T."/>
            <person name="Heijnen L."/>
            <person name="Schwarz S."/>
            <person name="Scholler P."/>
            <person name="Heber S."/>
            <person name="Francs P."/>
            <person name="Bielke C."/>
            <person name="Frishman D."/>
            <person name="Haase D."/>
            <person name="Lemcke K."/>
            <person name="Mewes H.-W."/>
            <person name="Stocker S."/>
            <person name="Zaccaria P."/>
            <person name="Bevan M."/>
            <person name="Wilson R.K."/>
            <person name="de la Bastide M."/>
            <person name="Habermann K."/>
            <person name="Parnell L."/>
            <person name="Dedhia N."/>
            <person name="Gnoj L."/>
            <person name="Schutz K."/>
            <person name="Huang E."/>
            <person name="Spiegel L."/>
            <person name="Sekhon M."/>
            <person name="Murray J."/>
            <person name="Sheet P."/>
            <person name="Cordes M."/>
            <person name="Abu-Threideh J."/>
            <person name="Stoneking T."/>
            <person name="Kalicki J."/>
            <person name="Graves T."/>
            <person name="Harmon G."/>
            <person name="Edwards J."/>
            <person name="Latreille P."/>
            <person name="Courtney L."/>
            <person name="Cloud J."/>
            <person name="Abbott A."/>
            <person name="Scott K."/>
            <person name="Johnson D."/>
            <person name="Minx P."/>
            <person name="Bentley D."/>
            <person name="Fulton B."/>
            <person name="Miller N."/>
            <person name="Greco T."/>
            <person name="Kemp K."/>
            <person name="Kramer J."/>
            <person name="Fulton L."/>
            <person name="Mardis E."/>
            <person name="Dante M."/>
            <person name="Pepin K."/>
            <person name="Hillier L.W."/>
            <person name="Nelson J."/>
            <person name="Spieth J."/>
            <person name="Ryan E."/>
            <person name="Andrews S."/>
            <person name="Geisel C."/>
            <person name="Layman D."/>
            <person name="Du H."/>
            <person name="Ali J."/>
            <person name="Berghoff A."/>
            <person name="Jones K."/>
            <person name="Drone K."/>
            <person name="Cotton M."/>
            <person name="Joshu C."/>
            <person name="Antonoiu B."/>
            <person name="Zidanic M."/>
            <person name="Strong C."/>
            <person name="Sun H."/>
            <person name="Lamar B."/>
            <person name="Yordan C."/>
            <person name="Ma P."/>
            <person name="Zhong J."/>
            <person name="Preston R."/>
            <person name="Vil D."/>
            <person name="Shekher M."/>
            <person name="Matero A."/>
            <person name="Shah R."/>
            <person name="Swaby I.K."/>
            <person name="O'Shaughnessy A."/>
            <person name="Rodriguez M."/>
            <person name="Hoffman J."/>
            <person name="Till S."/>
            <person name="Granat S."/>
            <person name="Shohdy N."/>
            <person name="Hasegawa A."/>
            <person name="Hameed A."/>
            <person name="Lodhi M."/>
            <person name="Johnson A."/>
            <person name="Chen E."/>
            <person name="Marra M.A."/>
            <person name="Martienssen R."/>
            <person name="McCombie W.R."/>
        </authorList>
    </citation>
    <scope>NUCLEOTIDE SEQUENCE [LARGE SCALE GENOMIC DNA]</scope>
    <source>
        <strain>cv. Columbia</strain>
    </source>
</reference>
<reference key="3">
    <citation type="journal article" date="2017" name="Plant J.">
        <title>Araport11: a complete reannotation of the Arabidopsis thaliana reference genome.</title>
        <authorList>
            <person name="Cheng C.Y."/>
            <person name="Krishnakumar V."/>
            <person name="Chan A.P."/>
            <person name="Thibaud-Nissen F."/>
            <person name="Schobel S."/>
            <person name="Town C.D."/>
        </authorList>
    </citation>
    <scope>GENOME REANNOTATION</scope>
    <source>
        <strain>cv. Columbia</strain>
    </source>
</reference>
<reference key="4">
    <citation type="journal article" date="2003" name="Science">
        <title>Empirical analysis of transcriptional activity in the Arabidopsis genome.</title>
        <authorList>
            <person name="Yamada K."/>
            <person name="Lim J."/>
            <person name="Dale J.M."/>
            <person name="Chen H."/>
            <person name="Shinn P."/>
            <person name="Palm C.J."/>
            <person name="Southwick A.M."/>
            <person name="Wu H.C."/>
            <person name="Kim C.J."/>
            <person name="Nguyen M."/>
            <person name="Pham P.K."/>
            <person name="Cheuk R.F."/>
            <person name="Karlin-Newmann G."/>
            <person name="Liu S.X."/>
            <person name="Lam B."/>
            <person name="Sakano H."/>
            <person name="Wu T."/>
            <person name="Yu G."/>
            <person name="Miranda M."/>
            <person name="Quach H.L."/>
            <person name="Tripp M."/>
            <person name="Chang C.H."/>
            <person name="Lee J.M."/>
            <person name="Toriumi M.J."/>
            <person name="Chan M.M."/>
            <person name="Tang C.C."/>
            <person name="Onodera C.S."/>
            <person name="Deng J.M."/>
            <person name="Akiyama K."/>
            <person name="Ansari Y."/>
            <person name="Arakawa T."/>
            <person name="Banh J."/>
            <person name="Banno F."/>
            <person name="Bowser L."/>
            <person name="Brooks S.Y."/>
            <person name="Carninci P."/>
            <person name="Chao Q."/>
            <person name="Choy N."/>
            <person name="Enju A."/>
            <person name="Goldsmith A.D."/>
            <person name="Gurjal M."/>
            <person name="Hansen N.F."/>
            <person name="Hayashizaki Y."/>
            <person name="Johnson-Hopson C."/>
            <person name="Hsuan V.W."/>
            <person name="Iida K."/>
            <person name="Karnes M."/>
            <person name="Khan S."/>
            <person name="Koesema E."/>
            <person name="Ishida J."/>
            <person name="Jiang P.X."/>
            <person name="Jones T."/>
            <person name="Kawai J."/>
            <person name="Kamiya A."/>
            <person name="Meyers C."/>
            <person name="Nakajima M."/>
            <person name="Narusaka M."/>
            <person name="Seki M."/>
            <person name="Sakurai T."/>
            <person name="Satou M."/>
            <person name="Tamse R."/>
            <person name="Vaysberg M."/>
            <person name="Wallender E.K."/>
            <person name="Wong C."/>
            <person name="Yamamura Y."/>
            <person name="Yuan S."/>
            <person name="Shinozaki K."/>
            <person name="Davis R.W."/>
            <person name="Theologis A."/>
            <person name="Ecker J.R."/>
        </authorList>
    </citation>
    <scope>NUCLEOTIDE SEQUENCE [LARGE SCALE MRNA]</scope>
    <source>
        <strain>cv. Columbia</strain>
    </source>
</reference>
<reference key="5">
    <citation type="submission" date="2006-07" db="EMBL/GenBank/DDBJ databases">
        <title>Large-scale analysis of RIKEN Arabidopsis full-length (RAFL) cDNAs.</title>
        <authorList>
            <person name="Totoki Y."/>
            <person name="Seki M."/>
            <person name="Ishida J."/>
            <person name="Nakajima M."/>
            <person name="Enju A."/>
            <person name="Kamiya A."/>
            <person name="Narusaka M."/>
            <person name="Shin-i T."/>
            <person name="Nakagawa M."/>
            <person name="Sakamoto N."/>
            <person name="Oishi K."/>
            <person name="Kohara Y."/>
            <person name="Kobayashi M."/>
            <person name="Toyoda A."/>
            <person name="Sakaki Y."/>
            <person name="Sakurai T."/>
            <person name="Iida K."/>
            <person name="Akiyama K."/>
            <person name="Satou M."/>
            <person name="Toyoda T."/>
            <person name="Konagaya A."/>
            <person name="Carninci P."/>
            <person name="Kawai J."/>
            <person name="Hayashizaki Y."/>
            <person name="Shinozaki K."/>
        </authorList>
    </citation>
    <scope>NUCLEOTIDE SEQUENCE [LARGE SCALE MRNA]</scope>
    <source>
        <strain>cv. Columbia</strain>
    </source>
</reference>
<reference key="6">
    <citation type="submission" date="2002-03" db="EMBL/GenBank/DDBJ databases">
        <title>Full-length cDNA from Arabidopsis thaliana.</title>
        <authorList>
            <person name="Brover V.V."/>
            <person name="Troukhan M.E."/>
            <person name="Alexandrov N.A."/>
            <person name="Lu Y.-P."/>
            <person name="Flavell R.B."/>
            <person name="Feldmann K.A."/>
        </authorList>
    </citation>
    <scope>NUCLEOTIDE SEQUENCE [LARGE SCALE MRNA]</scope>
</reference>
<reference key="7">
    <citation type="submission" date="1998-08" db="EMBL/GenBank/DDBJ databases">
        <title>Signal peptide selection derived cDNAs from Arabidopsis thaliana leaves and guard cells.</title>
        <authorList>
            <person name="Stracke R."/>
            <person name="Palme K."/>
        </authorList>
    </citation>
    <scope>NUCLEOTIDE SEQUENCE [LARGE SCALE MRNA] OF 1-192</scope>
</reference>
<reference key="8">
    <citation type="journal article" date="2002" name="Ann. Bot.">
        <title>Classification of genes differentially expressed during water-deficit stress in Arabidopsis thaliana: an analysis using microarray and differential expression data.</title>
        <authorList>
            <person name="Bray E.A."/>
        </authorList>
    </citation>
    <scope>INDUCTION BY DROUGHT STRESS</scope>
</reference>
<reference key="9">
    <citation type="journal article" date="2008" name="Plant Cell">
        <title>RD19, an Arabidopsis cysteine protease required for RRS1-R-mediated resistance, is relocalized to the nucleus by the Ralstonia solanacearum PopP2 effector.</title>
        <authorList>
            <person name="Bernoux M."/>
            <person name="Timmers T."/>
            <person name="Jauneau A."/>
            <person name="Briere C."/>
            <person name="de Wit P.J."/>
            <person name="Marco Y."/>
            <person name="Deslandes L."/>
        </authorList>
    </citation>
    <scope>FUNCTION</scope>
    <scope>INTERACTION WITH THE RALSTONIA SOLANACEARUM EFFECTOR POPP2</scope>
    <scope>SUBCELLULAR LOCATION</scope>
</reference>
<protein>
    <recommendedName>
        <fullName evidence="14">Cysteine protease RD19A</fullName>
        <ecNumber evidence="3">3.4.22.-</ecNumber>
    </recommendedName>
    <alternativeName>
        <fullName evidence="13">Protein RESPONSIVE TO DEHYDRATION 19</fullName>
        <shortName evidence="13">RD19</shortName>
    </alternativeName>
</protein>
<evidence type="ECO:0000250" key="1">
    <source>
        <dbReference type="UniProtKB" id="P00785"/>
    </source>
</evidence>
<evidence type="ECO:0000250" key="2">
    <source>
        <dbReference type="UniProtKB" id="P43297"/>
    </source>
</evidence>
<evidence type="ECO:0000250" key="3">
    <source>
        <dbReference type="UniProtKB" id="P80884"/>
    </source>
</evidence>
<evidence type="ECO:0000250" key="4">
    <source>
        <dbReference type="UniProtKB" id="P84346"/>
    </source>
</evidence>
<evidence type="ECO:0000255" key="5"/>
<evidence type="ECO:0000255" key="6">
    <source>
        <dbReference type="PROSITE-ProRule" id="PRU00498"/>
    </source>
</evidence>
<evidence type="ECO:0000255" key="7">
    <source>
        <dbReference type="PROSITE-ProRule" id="PRU10088"/>
    </source>
</evidence>
<evidence type="ECO:0000255" key="8">
    <source>
        <dbReference type="PROSITE-ProRule" id="PRU10089"/>
    </source>
</evidence>
<evidence type="ECO:0000255" key="9">
    <source>
        <dbReference type="PROSITE-ProRule" id="PRU10090"/>
    </source>
</evidence>
<evidence type="ECO:0000269" key="10">
    <source>
    </source>
</evidence>
<evidence type="ECO:0000269" key="11">
    <source>
    </source>
</evidence>
<evidence type="ECO:0000269" key="12">
    <source>
    </source>
</evidence>
<evidence type="ECO:0000303" key="13">
    <source>
    </source>
</evidence>
<evidence type="ECO:0000305" key="14"/>
<evidence type="ECO:0000312" key="15">
    <source>
        <dbReference type="Araport" id="AT4G39090"/>
    </source>
</evidence>
<evidence type="ECO:0000312" key="16">
    <source>
        <dbReference type="EMBL" id="CAB38829.1"/>
    </source>
</evidence>
<sequence length="368" mass="40419">MDRLKLYFSVFVLSFFIVSVSSSDVNDGDDLVIRQVVGGAEPQVLTSEDHFSLFKRKFGKVYASNEEHDYRFSVFKANLRRARRHQKLDPSATHGVTQFSDLTRSEFRKKHLGVRSGFKLPKDANKAPILPTENLPEDFDWRDHGAVTPVKNQGSCGSCWSFSATGALEGANFLATGKLVSLSEQQLVDCDHECDPEEADSCDSGCNGGLMNSAFEYTLKTGGLMKEEDYPYTGKDGKTCKLDKSKIVASVSNFSVISIDEEQIAANLVKNGPLAVAINAGYMQTYIGGVSCPYICTRRLNHGVLLVGYGAAGYAPARFKEKPYWIIKNSWGETWGENGFYKICKGRNICGVDSMVSTVAATVSTTAH</sequence>
<gene>
    <name evidence="13" type="primary">RD19A</name>
    <name evidence="15" type="ordered locus">At4g39090</name>
    <name evidence="16" type="ORF">F19H22.190</name>
</gene>
<organism>
    <name type="scientific">Arabidopsis thaliana</name>
    <name type="common">Mouse-ear cress</name>
    <dbReference type="NCBI Taxonomy" id="3702"/>
    <lineage>
        <taxon>Eukaryota</taxon>
        <taxon>Viridiplantae</taxon>
        <taxon>Streptophyta</taxon>
        <taxon>Embryophyta</taxon>
        <taxon>Tracheophyta</taxon>
        <taxon>Spermatophyta</taxon>
        <taxon>Magnoliopsida</taxon>
        <taxon>eudicotyledons</taxon>
        <taxon>Gunneridae</taxon>
        <taxon>Pentapetalae</taxon>
        <taxon>rosids</taxon>
        <taxon>malvids</taxon>
        <taxon>Brassicales</taxon>
        <taxon>Brassicaceae</taxon>
        <taxon>Camelineae</taxon>
        <taxon>Arabidopsis</taxon>
    </lineage>
</organism>